<proteinExistence type="evidence at protein level"/>
<comment type="function">
    <text evidence="1 2">Plays a role in the transport of the budded virion (BV) to the host nucleus and for occlusion of viral progeny.</text>
</comment>
<comment type="subcellular location">
    <subcellularLocation>
        <location evidence="1">Host cytoplasm</location>
    </subcellularLocation>
    <subcellularLocation>
        <location evidence="1">Host nucleus</location>
    </subcellularLocation>
</comment>
<sequence length="390" mass="44803">MECPFQIQVCISDRFFAFPHNLVEPQSDVGNKLIENLIVYVPTDDDRLYIDKKQFPKFNSVLVYRHEHDVNIDSRSPKKTASATIVYWNPLVPITEIGAGETRVFSVLLTNNLFYCNTMIVHHENPKCPIEFTYPETDMQSACSALLKNRNGQSVPPPIKSNLRPIACEIPLSHFKELVESNDFLLCFNLETSTMVKILSLKRIFCIFQYRKQPARYVINLPHEEIDNLYNKLNWERTRRLMKGDVPSNCATVNRSSLKYIKQAQSLLGIPDYSQTVVDFVKMFQKIIFPYQLVPNVIIKLNNFDQMVSSAPNKAEPYKKIRLFCKNDSIAISSSGIVPINMPDFSPPNTFDYSDYANRTNINFVTQRVLTDGGFSSGITVTPVKYNYYL</sequence>
<evidence type="ECO:0000269" key="1">
    <source>
    </source>
</evidence>
<evidence type="ECO:0000269" key="2">
    <source>
    </source>
</evidence>
<keyword id="KW-0002">3D-structure</keyword>
<keyword id="KW-1035">Host cytoplasm</keyword>
<keyword id="KW-1048">Host nucleus</keyword>
<keyword id="KW-1185">Reference proteome</keyword>
<organismHost>
    <name type="scientific">Lepidoptera</name>
    <name type="common">butterflies and moths</name>
    <dbReference type="NCBI Taxonomy" id="7088"/>
</organismHost>
<accession>P41662</accession>
<gene>
    <name type="primary">ORF109</name>
</gene>
<protein>
    <recommendedName>
        <fullName>Protein AC109</fullName>
    </recommendedName>
</protein>
<feature type="chain" id="PRO_0000133043" description="Protein AC109">
    <location>
        <begin position="1"/>
        <end position="390"/>
    </location>
</feature>
<reference key="1">
    <citation type="journal article" date="1994" name="Virology">
        <title>The complete DNA sequence of Autographa californica nuclear polyhedrosis virus.</title>
        <authorList>
            <person name="Ayres M.D."/>
            <person name="Howard S.C."/>
            <person name="Kuzio J."/>
            <person name="Lopez-Ferber M."/>
            <person name="Possee R.D."/>
        </authorList>
    </citation>
    <scope>NUCLEOTIDE SEQUENCE [LARGE SCALE GENOMIC DNA]</scope>
    <source>
        <strain>C6</strain>
    </source>
</reference>
<reference key="2">
    <citation type="journal article" date="2012" name="PLoS ONE">
        <title>AcMNPV core gene ac109 is required for budded virion transport to the nucleus and for occlusion of viral progeny.</title>
        <authorList>
            <person name="Alfonso V."/>
            <person name="Maroniche G.A."/>
            <person name="Reca S.R."/>
            <person name="Lopez M.G."/>
            <person name="del Vas M."/>
            <person name="Taboga O."/>
        </authorList>
    </citation>
    <scope>FUNCTION</scope>
    <scope>SUBCELLULAR LOCATION</scope>
</reference>
<reference key="3">
    <citation type="journal article" date="2013" name="Virology">
        <title>Autographa californica M nucleopolyhedrovirus open reading frame 109 affects infectious budded virus production and nucleocapsid envelopment in the nucleus of cells.</title>
        <authorList>
            <person name="Lehiy C.J."/>
            <person name="Wu W."/>
            <person name="Berretta M.F."/>
            <person name="Passarelli A.L."/>
        </authorList>
    </citation>
    <scope>FUNCTION</scope>
</reference>
<name>AC109_NPVAC</name>
<organism>
    <name type="scientific">Autographa californica nuclear polyhedrosis virus</name>
    <name type="common">AcMNPV</name>
    <dbReference type="NCBI Taxonomy" id="46015"/>
    <lineage>
        <taxon>Viruses</taxon>
        <taxon>Viruses incertae sedis</taxon>
        <taxon>Naldaviricetes</taxon>
        <taxon>Lefavirales</taxon>
        <taxon>Baculoviridae</taxon>
        <taxon>Alphabaculovirus</taxon>
        <taxon>Alphabaculovirus aucalifornicae</taxon>
    </lineage>
</organism>
<dbReference type="EMBL" id="L22858">
    <property type="protein sequence ID" value="AAA66739.1"/>
    <property type="molecule type" value="Genomic_DNA"/>
</dbReference>
<dbReference type="PIR" id="F72863">
    <property type="entry name" value="F72863"/>
</dbReference>
<dbReference type="PDB" id="8I8B">
    <property type="method" value="EM"/>
    <property type="resolution" value="4.31 A"/>
    <property type="chains" value="D=1-390"/>
</dbReference>
<dbReference type="PDB" id="8VWI">
    <property type="method" value="EM"/>
    <property type="resolution" value="4.71 A"/>
    <property type="chains" value="N/i=1-390"/>
</dbReference>
<dbReference type="PDB" id="8VWJ">
    <property type="method" value="EM"/>
    <property type="resolution" value="4.78 A"/>
    <property type="chains" value="N/i=1-390"/>
</dbReference>
<dbReference type="PDBsum" id="8I8B"/>
<dbReference type="PDBsum" id="8VWI"/>
<dbReference type="PDBsum" id="8VWJ"/>
<dbReference type="EMDB" id="EMD-43588"/>
<dbReference type="EMDB" id="EMD-43589"/>
<dbReference type="SMR" id="P41662"/>
<dbReference type="KEGG" id="vg:1403942"/>
<dbReference type="OrthoDB" id="5447at10239"/>
<dbReference type="Proteomes" id="UP000008292">
    <property type="component" value="Segment"/>
</dbReference>
<dbReference type="GO" id="GO:0043657">
    <property type="term" value="C:host cell"/>
    <property type="evidence" value="ECO:0007669"/>
    <property type="project" value="GOC"/>
</dbReference>
<dbReference type="GO" id="GO:0030430">
    <property type="term" value="C:host cell cytoplasm"/>
    <property type="evidence" value="ECO:0000314"/>
    <property type="project" value="UniProtKB"/>
</dbReference>
<dbReference type="GO" id="GO:0042025">
    <property type="term" value="C:host cell nucleus"/>
    <property type="evidence" value="ECO:0000314"/>
    <property type="project" value="UniProtKB"/>
</dbReference>
<dbReference type="GO" id="GO:0039708">
    <property type="term" value="P:nuclear capsid assembly"/>
    <property type="evidence" value="ECO:0000315"/>
    <property type="project" value="CACAO"/>
</dbReference>
<dbReference type="GO" id="GO:0075606">
    <property type="term" value="P:transport of viral material towards nucleus"/>
    <property type="evidence" value="ECO:0000314"/>
    <property type="project" value="UniProtKB"/>
</dbReference>
<dbReference type="InterPro" id="IPR007748">
    <property type="entry name" value="AcMNPV_Orf109"/>
</dbReference>
<dbReference type="Pfam" id="PF05054">
    <property type="entry name" value="AcMNPV_Ac109"/>
    <property type="match status" value="1"/>
</dbReference>